<dbReference type="EMBL" id="BA000033">
    <property type="protein sequence ID" value="BAB95483.1"/>
    <property type="molecule type" value="Genomic_DNA"/>
</dbReference>
<dbReference type="RefSeq" id="WP_000472304.1">
    <property type="nucleotide sequence ID" value="NC_003923.1"/>
</dbReference>
<dbReference type="SMR" id="Q8NW72"/>
<dbReference type="KEGG" id="sam:MW1618"/>
<dbReference type="HOGENOM" id="CLU_014218_8_2_9"/>
<dbReference type="GO" id="GO:0009376">
    <property type="term" value="C:HslUV protease complex"/>
    <property type="evidence" value="ECO:0007669"/>
    <property type="project" value="TreeGrafter"/>
</dbReference>
<dbReference type="GO" id="GO:0005524">
    <property type="term" value="F:ATP binding"/>
    <property type="evidence" value="ECO:0007669"/>
    <property type="project" value="UniProtKB-UniRule"/>
</dbReference>
<dbReference type="GO" id="GO:0016887">
    <property type="term" value="F:ATP hydrolysis activity"/>
    <property type="evidence" value="ECO:0007669"/>
    <property type="project" value="InterPro"/>
</dbReference>
<dbReference type="GO" id="GO:0140662">
    <property type="term" value="F:ATP-dependent protein folding chaperone"/>
    <property type="evidence" value="ECO:0007669"/>
    <property type="project" value="InterPro"/>
</dbReference>
<dbReference type="GO" id="GO:0046983">
    <property type="term" value="F:protein dimerization activity"/>
    <property type="evidence" value="ECO:0007669"/>
    <property type="project" value="InterPro"/>
</dbReference>
<dbReference type="GO" id="GO:0051082">
    <property type="term" value="F:unfolded protein binding"/>
    <property type="evidence" value="ECO:0007669"/>
    <property type="project" value="UniProtKB-UniRule"/>
</dbReference>
<dbReference type="GO" id="GO:0008270">
    <property type="term" value="F:zinc ion binding"/>
    <property type="evidence" value="ECO:0007669"/>
    <property type="project" value="InterPro"/>
</dbReference>
<dbReference type="GO" id="GO:0051301">
    <property type="term" value="P:cell division"/>
    <property type="evidence" value="ECO:0007669"/>
    <property type="project" value="TreeGrafter"/>
</dbReference>
<dbReference type="GO" id="GO:0051603">
    <property type="term" value="P:proteolysis involved in protein catabolic process"/>
    <property type="evidence" value="ECO:0007669"/>
    <property type="project" value="TreeGrafter"/>
</dbReference>
<dbReference type="CDD" id="cd19497">
    <property type="entry name" value="RecA-like_ClpX"/>
    <property type="match status" value="1"/>
</dbReference>
<dbReference type="FunFam" id="1.10.8.60:FF:000002">
    <property type="entry name" value="ATP-dependent Clp protease ATP-binding subunit ClpX"/>
    <property type="match status" value="1"/>
</dbReference>
<dbReference type="FunFam" id="3.40.50.300:FF:000005">
    <property type="entry name" value="ATP-dependent Clp protease ATP-binding subunit ClpX"/>
    <property type="match status" value="1"/>
</dbReference>
<dbReference type="Gene3D" id="1.10.8.60">
    <property type="match status" value="1"/>
</dbReference>
<dbReference type="Gene3D" id="6.20.220.10">
    <property type="entry name" value="ClpX chaperone, C4-type zinc finger domain"/>
    <property type="match status" value="1"/>
</dbReference>
<dbReference type="Gene3D" id="3.40.50.300">
    <property type="entry name" value="P-loop containing nucleotide triphosphate hydrolases"/>
    <property type="match status" value="1"/>
</dbReference>
<dbReference type="HAMAP" id="MF_00175">
    <property type="entry name" value="ClpX"/>
    <property type="match status" value="1"/>
</dbReference>
<dbReference type="InterPro" id="IPR003593">
    <property type="entry name" value="AAA+_ATPase"/>
</dbReference>
<dbReference type="InterPro" id="IPR050052">
    <property type="entry name" value="ATP-dep_Clp_protease_ClpX"/>
</dbReference>
<dbReference type="InterPro" id="IPR003959">
    <property type="entry name" value="ATPase_AAA_core"/>
</dbReference>
<dbReference type="InterPro" id="IPR019489">
    <property type="entry name" value="Clp_ATPase_C"/>
</dbReference>
<dbReference type="InterPro" id="IPR004487">
    <property type="entry name" value="Clp_protease_ATP-bd_su_ClpX"/>
</dbReference>
<dbReference type="InterPro" id="IPR046425">
    <property type="entry name" value="ClpX_bact"/>
</dbReference>
<dbReference type="InterPro" id="IPR027417">
    <property type="entry name" value="P-loop_NTPase"/>
</dbReference>
<dbReference type="InterPro" id="IPR010603">
    <property type="entry name" value="Znf_CppX_C4"/>
</dbReference>
<dbReference type="InterPro" id="IPR038366">
    <property type="entry name" value="Znf_CppX_C4_sf"/>
</dbReference>
<dbReference type="NCBIfam" id="TIGR00382">
    <property type="entry name" value="clpX"/>
    <property type="match status" value="1"/>
</dbReference>
<dbReference type="NCBIfam" id="NF003745">
    <property type="entry name" value="PRK05342.1"/>
    <property type="match status" value="1"/>
</dbReference>
<dbReference type="PANTHER" id="PTHR48102:SF7">
    <property type="entry name" value="ATP-DEPENDENT CLP PROTEASE ATP-BINDING SUBUNIT CLPX-LIKE, MITOCHONDRIAL"/>
    <property type="match status" value="1"/>
</dbReference>
<dbReference type="PANTHER" id="PTHR48102">
    <property type="entry name" value="ATP-DEPENDENT CLP PROTEASE ATP-BINDING SUBUNIT CLPX-LIKE, MITOCHONDRIAL-RELATED"/>
    <property type="match status" value="1"/>
</dbReference>
<dbReference type="Pfam" id="PF07724">
    <property type="entry name" value="AAA_2"/>
    <property type="match status" value="1"/>
</dbReference>
<dbReference type="Pfam" id="PF10431">
    <property type="entry name" value="ClpB_D2-small"/>
    <property type="match status" value="1"/>
</dbReference>
<dbReference type="Pfam" id="PF06689">
    <property type="entry name" value="zf-C4_ClpX"/>
    <property type="match status" value="1"/>
</dbReference>
<dbReference type="SMART" id="SM00382">
    <property type="entry name" value="AAA"/>
    <property type="match status" value="1"/>
</dbReference>
<dbReference type="SMART" id="SM01086">
    <property type="entry name" value="ClpB_D2-small"/>
    <property type="match status" value="1"/>
</dbReference>
<dbReference type="SMART" id="SM00994">
    <property type="entry name" value="zf-C4_ClpX"/>
    <property type="match status" value="1"/>
</dbReference>
<dbReference type="SUPFAM" id="SSF57716">
    <property type="entry name" value="Glucocorticoid receptor-like (DNA-binding domain)"/>
    <property type="match status" value="1"/>
</dbReference>
<dbReference type="SUPFAM" id="SSF52540">
    <property type="entry name" value="P-loop containing nucleoside triphosphate hydrolases"/>
    <property type="match status" value="1"/>
</dbReference>
<dbReference type="PROSITE" id="PS51902">
    <property type="entry name" value="CLPX_ZB"/>
    <property type="match status" value="1"/>
</dbReference>
<protein>
    <recommendedName>
        <fullName evidence="1">ATP-dependent Clp protease ATP-binding subunit ClpX</fullName>
    </recommendedName>
</protein>
<accession>Q8NW72</accession>
<reference key="1">
    <citation type="journal article" date="2002" name="Lancet">
        <title>Genome and virulence determinants of high virulence community-acquired MRSA.</title>
        <authorList>
            <person name="Baba T."/>
            <person name="Takeuchi F."/>
            <person name="Kuroda M."/>
            <person name="Yuzawa H."/>
            <person name="Aoki K."/>
            <person name="Oguchi A."/>
            <person name="Nagai Y."/>
            <person name="Iwama N."/>
            <person name="Asano K."/>
            <person name="Naimi T."/>
            <person name="Kuroda H."/>
            <person name="Cui L."/>
            <person name="Yamamoto K."/>
            <person name="Hiramatsu K."/>
        </authorList>
    </citation>
    <scope>NUCLEOTIDE SEQUENCE [LARGE SCALE GENOMIC DNA]</scope>
    <source>
        <strain>MW2</strain>
    </source>
</reference>
<name>CLPX_STAAW</name>
<keyword id="KW-0067">ATP-binding</keyword>
<keyword id="KW-0143">Chaperone</keyword>
<keyword id="KW-0479">Metal-binding</keyword>
<keyword id="KW-0547">Nucleotide-binding</keyword>
<keyword id="KW-0862">Zinc</keyword>
<proteinExistence type="inferred from homology"/>
<sequence>MFKFNEDEENLKCSFCGKDQDQVKKLVAGSGVYICNECIELCSEIVEEELAQNTSEAMTELPTPKEIMDHLNEYVIGQEKAKKSLAVAVYNHYKRIQQLGPKEDDVELQKSNIALIGPTGSGKTLLAQTLAKTLNVPFAIADATSLTEAGYVGDDVENILLRLIQAADFDIDKAEKGIIYVDEIDKIARKSENTSITRDVSGEGVQQALLKILEGTTASVPPQGGRKHPNQEMIQIDTTNILFILGGAFDGIEEVIKRRLGEKVIGFSSNEADKYDEQALLAQIRPEDLQAYGLIPEFIGRVPIVANLETLDVTALKNILTQPKNALVKQYTKMLELDNVDLEFTEEALSAISEKAIERKTGARGLRSIIEESLIDIMFDVPSNENVTKVVITAQTINEETEPELYDAEGNLINNSKTSA</sequence>
<feature type="chain" id="PRO_0000160424" description="ATP-dependent Clp protease ATP-binding subunit ClpX">
    <location>
        <begin position="1"/>
        <end position="420"/>
    </location>
</feature>
<feature type="domain" description="ClpX-type ZB" evidence="2">
    <location>
        <begin position="1"/>
        <end position="54"/>
    </location>
</feature>
<feature type="binding site" evidence="2">
    <location>
        <position position="13"/>
    </location>
    <ligand>
        <name>Zn(2+)</name>
        <dbReference type="ChEBI" id="CHEBI:29105"/>
    </ligand>
</feature>
<feature type="binding site" evidence="2">
    <location>
        <position position="16"/>
    </location>
    <ligand>
        <name>Zn(2+)</name>
        <dbReference type="ChEBI" id="CHEBI:29105"/>
    </ligand>
</feature>
<feature type="binding site" evidence="2">
    <location>
        <position position="35"/>
    </location>
    <ligand>
        <name>Zn(2+)</name>
        <dbReference type="ChEBI" id="CHEBI:29105"/>
    </ligand>
</feature>
<feature type="binding site" evidence="2">
    <location>
        <position position="38"/>
    </location>
    <ligand>
        <name>Zn(2+)</name>
        <dbReference type="ChEBI" id="CHEBI:29105"/>
    </ligand>
</feature>
<feature type="binding site" evidence="1">
    <location>
        <begin position="118"/>
        <end position="125"/>
    </location>
    <ligand>
        <name>ATP</name>
        <dbReference type="ChEBI" id="CHEBI:30616"/>
    </ligand>
</feature>
<organism>
    <name type="scientific">Staphylococcus aureus (strain MW2)</name>
    <dbReference type="NCBI Taxonomy" id="196620"/>
    <lineage>
        <taxon>Bacteria</taxon>
        <taxon>Bacillati</taxon>
        <taxon>Bacillota</taxon>
        <taxon>Bacilli</taxon>
        <taxon>Bacillales</taxon>
        <taxon>Staphylococcaceae</taxon>
        <taxon>Staphylococcus</taxon>
    </lineage>
</organism>
<gene>
    <name evidence="1" type="primary">clpX</name>
    <name type="ordered locus">MW1618</name>
</gene>
<evidence type="ECO:0000255" key="1">
    <source>
        <dbReference type="HAMAP-Rule" id="MF_00175"/>
    </source>
</evidence>
<evidence type="ECO:0000255" key="2">
    <source>
        <dbReference type="PROSITE-ProRule" id="PRU01250"/>
    </source>
</evidence>
<comment type="function">
    <text evidence="1">ATP-dependent specificity component of the Clp protease. It directs the protease to specific substrates. Can perform chaperone functions in the absence of ClpP.</text>
</comment>
<comment type="subunit">
    <text evidence="1">Component of the ClpX-ClpP complex. Forms a hexameric ring that, in the presence of ATP, binds to fourteen ClpP subunits assembled into a disk-like structure with a central cavity, resembling the structure of eukaryotic proteasomes.</text>
</comment>
<comment type="similarity">
    <text evidence="1">Belongs to the ClpX chaperone family.</text>
</comment>